<proteinExistence type="evidence at transcript level"/>
<sequence>MTERRVPFSLLRSPSWDPFRDWYPAHSRLFDQAFGLPRLPEEWSQWLSHSGWPGYVRPLPPPAIEGPAAVAAPAYSRLLSRQLSSGVSEIQQTADRWRVSLDVNHFAPEELTVKTKDGVVEITGKHEERQDEHGFISRCFTRKYTLPPGVDPTQVSSSLSPEGTLSVEAPLPKPATQSAEITIPVTFEARAQLGGTEAGKSEKPGTK</sequence>
<name>HSPB1_PIG</name>
<evidence type="ECO:0000250" key="1"/>
<evidence type="ECO:0000250" key="2">
    <source>
        <dbReference type="UniProtKB" id="P04792"/>
    </source>
</evidence>
<evidence type="ECO:0000250" key="3">
    <source>
        <dbReference type="UniProtKB" id="P14602"/>
    </source>
</evidence>
<evidence type="ECO:0000250" key="4">
    <source>
        <dbReference type="UniProtKB" id="P42930"/>
    </source>
</evidence>
<evidence type="ECO:0000255" key="5">
    <source>
        <dbReference type="PROSITE-ProRule" id="PRU00285"/>
    </source>
</evidence>
<evidence type="ECO:0000256" key="6">
    <source>
        <dbReference type="SAM" id="MobiDB-lite"/>
    </source>
</evidence>
<organism>
    <name type="scientific">Sus scrofa</name>
    <name type="common">Pig</name>
    <dbReference type="NCBI Taxonomy" id="9823"/>
    <lineage>
        <taxon>Eukaryota</taxon>
        <taxon>Metazoa</taxon>
        <taxon>Chordata</taxon>
        <taxon>Craniata</taxon>
        <taxon>Vertebrata</taxon>
        <taxon>Euteleostomi</taxon>
        <taxon>Mammalia</taxon>
        <taxon>Eutheria</taxon>
        <taxon>Laurasiatheria</taxon>
        <taxon>Artiodactyla</taxon>
        <taxon>Suina</taxon>
        <taxon>Suidae</taxon>
        <taxon>Sus</taxon>
    </lineage>
</organism>
<comment type="function">
    <text evidence="2">Small heat shock protein which functions as a molecular chaperone probably maintaining denatured proteins in a folding-competent state. Plays a role in stress resistance and actin organization. Through its molecular chaperone activity may regulate numerous biological processes including the phosphorylation and the axonal transport of neurofilament proteins.</text>
</comment>
<comment type="subunit">
    <text evidence="2">Homooligomer. Homodimer; becomes monomeric upon activation. Heterooligomer; with HSPB6. Associates with alpha- and beta-tubulin. Interacts with TGFB1I1. Interacts with CRYAB. Interacts with HSPB8. Interacts with HSPBAP1.</text>
</comment>
<comment type="subcellular location">
    <subcellularLocation>
        <location evidence="2">Cytoplasm</location>
    </subcellularLocation>
    <subcellularLocation>
        <location evidence="2">Nucleus</location>
    </subcellularLocation>
    <subcellularLocation>
        <location evidence="2">Cytoplasm</location>
        <location evidence="2">Cytoskeleton</location>
        <location evidence="2">Spindle</location>
    </subcellularLocation>
    <text evidence="2">Cytoplasmic in interphase cells. Colocalizes with mitotic spindles in mitotic cells. Translocates to the nucleus during heat shock and resides in sub-nuclear structures known as SC35 speckles or nuclear splicing speckles.</text>
</comment>
<comment type="PTM">
    <text evidence="2">Phosphorylated upon exposure to protein kinase C activators and heat shock. Phosphorylation by MAPKAPK2 and MAPKAPK3 in response to stress dissociates HSPB1 from large small heat-shock protein (sHsps) oligomers and impairs its chaperone activity and ability to protect against oxidative stress effectively. Phosphorylation by MAPKAPK5 in response to PKA stimulation induces F-actin rearrangement.</text>
</comment>
<comment type="similarity">
    <text evidence="5">Belongs to the small heat shock protein (HSP20) family.</text>
</comment>
<gene>
    <name type="primary">HSPB1</name>
    <name type="synonym">HSP27</name>
</gene>
<accession>Q5S1U1</accession>
<keyword id="KW-0007">Acetylation</keyword>
<keyword id="KW-0143">Chaperone</keyword>
<keyword id="KW-0963">Cytoplasm</keyword>
<keyword id="KW-0206">Cytoskeleton</keyword>
<keyword id="KW-0488">Methylation</keyword>
<keyword id="KW-0539">Nucleus</keyword>
<keyword id="KW-0597">Phosphoprotein</keyword>
<keyword id="KW-1185">Reference proteome</keyword>
<keyword id="KW-0346">Stress response</keyword>
<feature type="chain" id="PRO_0000125929" description="Heat shock protein beta-1">
    <location>
        <begin position="1"/>
        <end position="207"/>
    </location>
</feature>
<feature type="domain" description="sHSP" evidence="5">
    <location>
        <begin position="78"/>
        <end position="186"/>
    </location>
</feature>
<feature type="region of interest" description="Interaction with TGFB1I1" evidence="1">
    <location>
        <begin position="72"/>
        <end position="207"/>
    </location>
</feature>
<feature type="region of interest" description="Disordered" evidence="6">
    <location>
        <begin position="151"/>
        <end position="181"/>
    </location>
</feature>
<feature type="compositionally biased region" description="Polar residues" evidence="6">
    <location>
        <begin position="153"/>
        <end position="163"/>
    </location>
</feature>
<feature type="modified residue" description="Omega-N-methylarginine" evidence="2">
    <location>
        <position position="12"/>
    </location>
</feature>
<feature type="modified residue" description="Phosphoserine" evidence="4">
    <location>
        <position position="13"/>
    </location>
</feature>
<feature type="modified residue" description="Phosphoserine; by MAPKAPK2 and MAPKAPK3" evidence="3">
    <location>
        <position position="15"/>
    </location>
</feature>
<feature type="modified residue" description="Phosphoserine" evidence="4">
    <location>
        <position position="27"/>
    </location>
</feature>
<feature type="modified residue" description="Phosphoserine; by MAPKAPK2, MAPKAPK3 and MAPKAPK5" evidence="2">
    <location>
        <position position="80"/>
    </location>
</feature>
<feature type="modified residue" description="Phosphoserine; by MAPKAPK2, MAPKAPK3 and MAPKAPK5" evidence="3">
    <location>
        <position position="84"/>
    </location>
</feature>
<feature type="modified residue" description="Phosphoserine" evidence="2">
    <location>
        <position position="85"/>
    </location>
</feature>
<feature type="modified residue" description="Phosphoserine" evidence="2">
    <location>
        <position position="88"/>
    </location>
</feature>
<feature type="modified residue" description="Phosphoserine" evidence="2">
    <location>
        <position position="100"/>
    </location>
</feature>
<feature type="modified residue" description="N6-acetyllysine" evidence="2">
    <location>
        <position position="125"/>
    </location>
</feature>
<feature type="modified residue" description="Phosphothreonine" evidence="2">
    <location>
        <position position="176"/>
    </location>
</feature>
<feature type="modified residue" description="Phosphoserine" evidence="2">
    <location>
        <position position="178"/>
    </location>
</feature>
<feature type="modified residue" description="Phosphoserine" evidence="2">
    <location>
        <position position="201"/>
    </location>
</feature>
<protein>
    <recommendedName>
        <fullName>Heat shock protein beta-1</fullName>
        <shortName>HspB1</shortName>
    </recommendedName>
    <alternativeName>
        <fullName>Heat shock 27 kDa protein</fullName>
        <shortName>HSP 27</shortName>
    </alternativeName>
</protein>
<dbReference type="EMBL" id="AY789513">
    <property type="protein sequence ID" value="AAV54182.1"/>
    <property type="molecule type" value="mRNA"/>
</dbReference>
<dbReference type="RefSeq" id="NP_001007519.1">
    <property type="nucleotide sequence ID" value="NM_001007518.1"/>
</dbReference>
<dbReference type="SMR" id="Q5S1U1"/>
<dbReference type="FunCoup" id="Q5S1U1">
    <property type="interactions" value="1790"/>
</dbReference>
<dbReference type="STRING" id="9823.ENSSSCP00000008215"/>
<dbReference type="iPTMnet" id="Q5S1U1"/>
<dbReference type="PaxDb" id="9823-ENSSSCP00000008215"/>
<dbReference type="PeptideAtlas" id="Q5S1U1"/>
<dbReference type="Ensembl" id="ENSSSCT00115025854">
    <property type="protein sequence ID" value="ENSSSCP00115024496"/>
    <property type="gene ID" value="ENSSSCG00115014894"/>
</dbReference>
<dbReference type="Ensembl" id="ENSSSCT00130054893">
    <property type="protein sequence ID" value="ENSSSCP00130039329"/>
    <property type="gene ID" value="ENSSSCG00130028133"/>
</dbReference>
<dbReference type="GeneID" id="493184"/>
<dbReference type="KEGG" id="ssc:493184"/>
<dbReference type="CTD" id="3315"/>
<dbReference type="eggNOG" id="KOG3591">
    <property type="taxonomic scope" value="Eukaryota"/>
</dbReference>
<dbReference type="HOGENOM" id="CLU_095001_0_0_1"/>
<dbReference type="InParanoid" id="Q5S1U1"/>
<dbReference type="OMA" id="QWPSHTS"/>
<dbReference type="OrthoDB" id="10060792at2759"/>
<dbReference type="TreeFam" id="TF105049"/>
<dbReference type="ChiTaRS" id="HSPB1">
    <property type="organism name" value="pig"/>
</dbReference>
<dbReference type="Proteomes" id="UP000008227">
    <property type="component" value="Unplaced"/>
</dbReference>
<dbReference type="Proteomes" id="UP000314985">
    <property type="component" value="Unplaced"/>
</dbReference>
<dbReference type="Proteomes" id="UP000694570">
    <property type="component" value="Unplaced"/>
</dbReference>
<dbReference type="Proteomes" id="UP000694571">
    <property type="component" value="Unplaced"/>
</dbReference>
<dbReference type="Proteomes" id="UP000694720">
    <property type="component" value="Unplaced"/>
</dbReference>
<dbReference type="Proteomes" id="UP000694722">
    <property type="component" value="Unplaced"/>
</dbReference>
<dbReference type="Proteomes" id="UP000694723">
    <property type="component" value="Unplaced"/>
</dbReference>
<dbReference type="Proteomes" id="UP000694724">
    <property type="component" value="Unplaced"/>
</dbReference>
<dbReference type="Proteomes" id="UP000694725">
    <property type="component" value="Unplaced"/>
</dbReference>
<dbReference type="Proteomes" id="UP000694726">
    <property type="component" value="Unplaced"/>
</dbReference>
<dbReference type="Proteomes" id="UP000694727">
    <property type="component" value="Unplaced"/>
</dbReference>
<dbReference type="Proteomes" id="UP000694728">
    <property type="component" value="Unplaced"/>
</dbReference>
<dbReference type="GO" id="GO:1904115">
    <property type="term" value="C:axon cytoplasm"/>
    <property type="evidence" value="ECO:0007669"/>
    <property type="project" value="GOC"/>
</dbReference>
<dbReference type="GO" id="GO:0005737">
    <property type="term" value="C:cytoplasm"/>
    <property type="evidence" value="ECO:0000250"/>
    <property type="project" value="UniProtKB"/>
</dbReference>
<dbReference type="GO" id="GO:0005634">
    <property type="term" value="C:nucleus"/>
    <property type="evidence" value="ECO:0000250"/>
    <property type="project" value="UniProtKB"/>
</dbReference>
<dbReference type="GO" id="GO:0005819">
    <property type="term" value="C:spindle"/>
    <property type="evidence" value="ECO:0007669"/>
    <property type="project" value="UniProtKB-SubCell"/>
</dbReference>
<dbReference type="GO" id="GO:0042802">
    <property type="term" value="F:identical protein binding"/>
    <property type="evidence" value="ECO:0000250"/>
    <property type="project" value="UniProtKB"/>
</dbReference>
<dbReference type="GO" id="GO:0044183">
    <property type="term" value="F:protein folding chaperone"/>
    <property type="evidence" value="ECO:0000250"/>
    <property type="project" value="UniProtKB"/>
</dbReference>
<dbReference type="GO" id="GO:0042803">
    <property type="term" value="F:protein homodimerization activity"/>
    <property type="evidence" value="ECO:0000250"/>
    <property type="project" value="UniProtKB"/>
</dbReference>
<dbReference type="GO" id="GO:0051082">
    <property type="term" value="F:unfolded protein binding"/>
    <property type="evidence" value="ECO:0000318"/>
    <property type="project" value="GO_Central"/>
</dbReference>
<dbReference type="GO" id="GO:0099641">
    <property type="term" value="P:anterograde axonal protein transport"/>
    <property type="evidence" value="ECO:0000250"/>
    <property type="project" value="UniProtKB"/>
</dbReference>
<dbReference type="GO" id="GO:0061077">
    <property type="term" value="P:chaperone-mediated protein folding"/>
    <property type="evidence" value="ECO:0000250"/>
    <property type="project" value="UniProtKB"/>
</dbReference>
<dbReference type="GO" id="GO:0043066">
    <property type="term" value="P:negative regulation of apoptotic process"/>
    <property type="evidence" value="ECO:0000318"/>
    <property type="project" value="GO_Central"/>
</dbReference>
<dbReference type="GO" id="GO:0042026">
    <property type="term" value="P:protein refolding"/>
    <property type="evidence" value="ECO:0000318"/>
    <property type="project" value="GO_Central"/>
</dbReference>
<dbReference type="GO" id="GO:0001932">
    <property type="term" value="P:regulation of protein phosphorylation"/>
    <property type="evidence" value="ECO:0000250"/>
    <property type="project" value="UniProtKB"/>
</dbReference>
<dbReference type="GO" id="GO:0009408">
    <property type="term" value="P:response to heat"/>
    <property type="evidence" value="ECO:0000318"/>
    <property type="project" value="GO_Central"/>
</dbReference>
<dbReference type="CDD" id="cd06475">
    <property type="entry name" value="ACD_HspB1_like"/>
    <property type="match status" value="1"/>
</dbReference>
<dbReference type="FunFam" id="2.60.40.790:FF:000024">
    <property type="entry name" value="heat shock protein beta-1"/>
    <property type="match status" value="1"/>
</dbReference>
<dbReference type="Gene3D" id="2.60.40.790">
    <property type="match status" value="1"/>
</dbReference>
<dbReference type="InterPro" id="IPR002068">
    <property type="entry name" value="A-crystallin/Hsp20_dom"/>
</dbReference>
<dbReference type="InterPro" id="IPR037876">
    <property type="entry name" value="ACD_HspB1"/>
</dbReference>
<dbReference type="InterPro" id="IPR001436">
    <property type="entry name" value="Alpha-crystallin/sHSP_animal"/>
</dbReference>
<dbReference type="InterPro" id="IPR008978">
    <property type="entry name" value="HSP20-like_chaperone"/>
</dbReference>
<dbReference type="PANTHER" id="PTHR45640:SF7">
    <property type="entry name" value="HEAT SHOCK PROTEIN BETA-1"/>
    <property type="match status" value="1"/>
</dbReference>
<dbReference type="PANTHER" id="PTHR45640">
    <property type="entry name" value="HEAT SHOCK PROTEIN HSP-12.2-RELATED"/>
    <property type="match status" value="1"/>
</dbReference>
<dbReference type="Pfam" id="PF00011">
    <property type="entry name" value="HSP20"/>
    <property type="match status" value="1"/>
</dbReference>
<dbReference type="PRINTS" id="PR00299">
    <property type="entry name" value="ACRYSTALLIN"/>
</dbReference>
<dbReference type="SUPFAM" id="SSF49764">
    <property type="entry name" value="HSP20-like chaperones"/>
    <property type="match status" value="1"/>
</dbReference>
<dbReference type="PROSITE" id="PS01031">
    <property type="entry name" value="SHSP"/>
    <property type="match status" value="1"/>
</dbReference>
<reference key="1">
    <citation type="submission" date="2004-10" db="EMBL/GenBank/DDBJ databases">
        <title>Sequence analysis of mammalian small heat shock proteins.</title>
        <authorList>
            <person name="Shelden E.A."/>
            <person name="Mao L."/>
        </authorList>
    </citation>
    <scope>NUCLEOTIDE SEQUENCE [MRNA]</scope>
</reference>